<dbReference type="EC" id="6.3.2.8" evidence="1"/>
<dbReference type="EMBL" id="CP000713">
    <property type="protein sequence ID" value="ABQ93480.1"/>
    <property type="molecule type" value="Genomic_DNA"/>
</dbReference>
<dbReference type="SMR" id="A5WCT9"/>
<dbReference type="STRING" id="349106.PsycPRwf_0525"/>
<dbReference type="KEGG" id="prw:PsycPRwf_0525"/>
<dbReference type="eggNOG" id="COG0773">
    <property type="taxonomic scope" value="Bacteria"/>
</dbReference>
<dbReference type="HOGENOM" id="CLU_028104_2_2_6"/>
<dbReference type="UniPathway" id="UPA00219"/>
<dbReference type="GO" id="GO:0005737">
    <property type="term" value="C:cytoplasm"/>
    <property type="evidence" value="ECO:0007669"/>
    <property type="project" value="UniProtKB-SubCell"/>
</dbReference>
<dbReference type="GO" id="GO:0005524">
    <property type="term" value="F:ATP binding"/>
    <property type="evidence" value="ECO:0007669"/>
    <property type="project" value="UniProtKB-UniRule"/>
</dbReference>
<dbReference type="GO" id="GO:0008763">
    <property type="term" value="F:UDP-N-acetylmuramate-L-alanine ligase activity"/>
    <property type="evidence" value="ECO:0007669"/>
    <property type="project" value="UniProtKB-UniRule"/>
</dbReference>
<dbReference type="GO" id="GO:0051301">
    <property type="term" value="P:cell division"/>
    <property type="evidence" value="ECO:0007669"/>
    <property type="project" value="UniProtKB-KW"/>
</dbReference>
<dbReference type="GO" id="GO:0071555">
    <property type="term" value="P:cell wall organization"/>
    <property type="evidence" value="ECO:0007669"/>
    <property type="project" value="UniProtKB-KW"/>
</dbReference>
<dbReference type="GO" id="GO:0009252">
    <property type="term" value="P:peptidoglycan biosynthetic process"/>
    <property type="evidence" value="ECO:0007669"/>
    <property type="project" value="UniProtKB-UniRule"/>
</dbReference>
<dbReference type="GO" id="GO:0008360">
    <property type="term" value="P:regulation of cell shape"/>
    <property type="evidence" value="ECO:0007669"/>
    <property type="project" value="UniProtKB-KW"/>
</dbReference>
<dbReference type="FunFam" id="3.40.1190.10:FF:000001">
    <property type="entry name" value="UDP-N-acetylmuramate--L-alanine ligase"/>
    <property type="match status" value="1"/>
</dbReference>
<dbReference type="Gene3D" id="3.90.190.20">
    <property type="entry name" value="Mur ligase, C-terminal domain"/>
    <property type="match status" value="1"/>
</dbReference>
<dbReference type="Gene3D" id="3.40.1190.10">
    <property type="entry name" value="Mur-like, catalytic domain"/>
    <property type="match status" value="1"/>
</dbReference>
<dbReference type="Gene3D" id="3.40.50.720">
    <property type="entry name" value="NAD(P)-binding Rossmann-like Domain"/>
    <property type="match status" value="1"/>
</dbReference>
<dbReference type="HAMAP" id="MF_00046">
    <property type="entry name" value="MurC"/>
    <property type="match status" value="1"/>
</dbReference>
<dbReference type="InterPro" id="IPR036565">
    <property type="entry name" value="Mur-like_cat_sf"/>
</dbReference>
<dbReference type="InterPro" id="IPR004101">
    <property type="entry name" value="Mur_ligase_C"/>
</dbReference>
<dbReference type="InterPro" id="IPR036615">
    <property type="entry name" value="Mur_ligase_C_dom_sf"/>
</dbReference>
<dbReference type="InterPro" id="IPR013221">
    <property type="entry name" value="Mur_ligase_cen"/>
</dbReference>
<dbReference type="InterPro" id="IPR000713">
    <property type="entry name" value="Mur_ligase_N"/>
</dbReference>
<dbReference type="InterPro" id="IPR050061">
    <property type="entry name" value="MurCDEF_pg_biosynth"/>
</dbReference>
<dbReference type="InterPro" id="IPR005758">
    <property type="entry name" value="UDP-N-AcMur_Ala_ligase_MurC"/>
</dbReference>
<dbReference type="NCBIfam" id="TIGR01082">
    <property type="entry name" value="murC"/>
    <property type="match status" value="1"/>
</dbReference>
<dbReference type="PANTHER" id="PTHR43445:SF3">
    <property type="entry name" value="UDP-N-ACETYLMURAMATE--L-ALANINE LIGASE"/>
    <property type="match status" value="1"/>
</dbReference>
<dbReference type="PANTHER" id="PTHR43445">
    <property type="entry name" value="UDP-N-ACETYLMURAMATE--L-ALANINE LIGASE-RELATED"/>
    <property type="match status" value="1"/>
</dbReference>
<dbReference type="Pfam" id="PF01225">
    <property type="entry name" value="Mur_ligase"/>
    <property type="match status" value="1"/>
</dbReference>
<dbReference type="Pfam" id="PF02875">
    <property type="entry name" value="Mur_ligase_C"/>
    <property type="match status" value="1"/>
</dbReference>
<dbReference type="Pfam" id="PF08245">
    <property type="entry name" value="Mur_ligase_M"/>
    <property type="match status" value="1"/>
</dbReference>
<dbReference type="SUPFAM" id="SSF51984">
    <property type="entry name" value="MurCD N-terminal domain"/>
    <property type="match status" value="1"/>
</dbReference>
<dbReference type="SUPFAM" id="SSF53623">
    <property type="entry name" value="MurD-like peptide ligases, catalytic domain"/>
    <property type="match status" value="1"/>
</dbReference>
<dbReference type="SUPFAM" id="SSF53244">
    <property type="entry name" value="MurD-like peptide ligases, peptide-binding domain"/>
    <property type="match status" value="1"/>
</dbReference>
<comment type="function">
    <text evidence="1">Cell wall formation.</text>
</comment>
<comment type="catalytic activity">
    <reaction evidence="1">
        <text>UDP-N-acetyl-alpha-D-muramate + L-alanine + ATP = UDP-N-acetyl-alpha-D-muramoyl-L-alanine + ADP + phosphate + H(+)</text>
        <dbReference type="Rhea" id="RHEA:23372"/>
        <dbReference type="ChEBI" id="CHEBI:15378"/>
        <dbReference type="ChEBI" id="CHEBI:30616"/>
        <dbReference type="ChEBI" id="CHEBI:43474"/>
        <dbReference type="ChEBI" id="CHEBI:57972"/>
        <dbReference type="ChEBI" id="CHEBI:70757"/>
        <dbReference type="ChEBI" id="CHEBI:83898"/>
        <dbReference type="ChEBI" id="CHEBI:456216"/>
        <dbReference type="EC" id="6.3.2.8"/>
    </reaction>
</comment>
<comment type="pathway">
    <text evidence="1">Cell wall biogenesis; peptidoglycan biosynthesis.</text>
</comment>
<comment type="subcellular location">
    <subcellularLocation>
        <location evidence="1">Cytoplasm</location>
    </subcellularLocation>
</comment>
<comment type="similarity">
    <text evidence="1">Belongs to the MurCDEF family.</text>
</comment>
<gene>
    <name evidence="1" type="primary">murC</name>
    <name type="ordered locus">PsycPRwf_0525</name>
</gene>
<organism>
    <name type="scientific">Psychrobacter sp. (strain PRwf-1)</name>
    <dbReference type="NCBI Taxonomy" id="349106"/>
    <lineage>
        <taxon>Bacteria</taxon>
        <taxon>Pseudomonadati</taxon>
        <taxon>Pseudomonadota</taxon>
        <taxon>Gammaproteobacteria</taxon>
        <taxon>Moraxellales</taxon>
        <taxon>Moraxellaceae</taxon>
        <taxon>Psychrobacter</taxon>
    </lineage>
</organism>
<protein>
    <recommendedName>
        <fullName evidence="1">UDP-N-acetylmuramate--L-alanine ligase</fullName>
        <ecNumber evidence="1">6.3.2.8</ecNumber>
    </recommendedName>
    <alternativeName>
        <fullName evidence="1">UDP-N-acetylmuramoyl-L-alanine synthetase</fullName>
    </alternativeName>
</protein>
<keyword id="KW-0067">ATP-binding</keyword>
<keyword id="KW-0131">Cell cycle</keyword>
<keyword id="KW-0132">Cell division</keyword>
<keyword id="KW-0133">Cell shape</keyword>
<keyword id="KW-0961">Cell wall biogenesis/degradation</keyword>
<keyword id="KW-0963">Cytoplasm</keyword>
<keyword id="KW-0436">Ligase</keyword>
<keyword id="KW-0547">Nucleotide-binding</keyword>
<keyword id="KW-0573">Peptidoglycan synthesis</keyword>
<evidence type="ECO:0000255" key="1">
    <source>
        <dbReference type="HAMAP-Rule" id="MF_00046"/>
    </source>
</evidence>
<name>MURC_PSYWF</name>
<accession>A5WCT9</accession>
<feature type="chain" id="PRO_0000336859" description="UDP-N-acetylmuramate--L-alanine ligase">
    <location>
        <begin position="1"/>
        <end position="476"/>
    </location>
</feature>
<feature type="binding site" evidence="1">
    <location>
        <begin position="126"/>
        <end position="132"/>
    </location>
    <ligand>
        <name>ATP</name>
        <dbReference type="ChEBI" id="CHEBI:30616"/>
    </ligand>
</feature>
<proteinExistence type="inferred from homology"/>
<sequence>MSKSALPKRLIEIPEMRRIKSIHFIGVGGAGMCGIAEVMKNQGYGVSGSDIKESPVTKRLQSLGIEVFIGHDSKNIANADVVVVSSAIDRENPEIQAALKAQLPVVRRADMLGELMRYRHGIAVAGAHGKTTTTSLLTMMMTEAGFDPTYVIGGKLNASGKNASLGESRYLIAEADESDASFLTLHPMAAIVTNIDQDHMDTYGNSFDKLKAAYIQFLQNMPFYGLAVVCGDDKELFDMIDDIGRPVLTFGLEPHNNVQATNVRVDGTKTHFTVLRKDREPLELTLNIPGQHNVLNALAAITMATDEGVNDDAIKRALAKFAGVGRRFEQQACVAKDDGDVLLIDDYGHHPVEVAATIKAARASYPERRLVMLFQPHRYSRTRDCYDDFVAVLSQVDVLLLLDVYSAGEAPIVGADTKSLARSIRLRGEVEPVVVDKDELAPVMQRVLQAGDMLITQGAGNVGQLSQQLAANNLYL</sequence>
<reference key="1">
    <citation type="submission" date="2007-05" db="EMBL/GenBank/DDBJ databases">
        <title>Complete sequence of chromosome of Psychrobacter sp. PRwf-1.</title>
        <authorList>
            <consortium name="US DOE Joint Genome Institute"/>
            <person name="Copeland A."/>
            <person name="Lucas S."/>
            <person name="Lapidus A."/>
            <person name="Barry K."/>
            <person name="Detter J.C."/>
            <person name="Glavina del Rio T."/>
            <person name="Hammon N."/>
            <person name="Israni S."/>
            <person name="Dalin E."/>
            <person name="Tice H."/>
            <person name="Pitluck S."/>
            <person name="Chain P."/>
            <person name="Malfatti S."/>
            <person name="Shin M."/>
            <person name="Vergez L."/>
            <person name="Schmutz J."/>
            <person name="Larimer F."/>
            <person name="Land M."/>
            <person name="Hauser L."/>
            <person name="Kyrpides N."/>
            <person name="Kim E."/>
            <person name="Tiedje J."/>
            <person name="Richardson P."/>
        </authorList>
    </citation>
    <scope>NUCLEOTIDE SEQUENCE [LARGE SCALE GENOMIC DNA]</scope>
    <source>
        <strain>PRwf-1</strain>
    </source>
</reference>